<protein>
    <recommendedName>
        <fullName evidence="1">Flagellar L-ring protein</fullName>
    </recommendedName>
    <alternativeName>
        <fullName evidence="1">Basal body L-ring protein</fullName>
    </alternativeName>
</protein>
<accession>A6WQJ8</accession>
<gene>
    <name evidence="1" type="primary">flgH</name>
    <name type="ordered locus">Shew185_2956</name>
</gene>
<proteinExistence type="inferred from homology"/>
<dbReference type="EMBL" id="CP000753">
    <property type="protein sequence ID" value="ABS09087.1"/>
    <property type="molecule type" value="Genomic_DNA"/>
</dbReference>
<dbReference type="RefSeq" id="WP_012089711.1">
    <property type="nucleotide sequence ID" value="NC_009665.1"/>
</dbReference>
<dbReference type="SMR" id="A6WQJ8"/>
<dbReference type="DNASU" id="5371021"/>
<dbReference type="KEGG" id="sbm:Shew185_2956"/>
<dbReference type="HOGENOM" id="CLU_069313_0_2_6"/>
<dbReference type="GO" id="GO:0009427">
    <property type="term" value="C:bacterial-type flagellum basal body, distal rod, L ring"/>
    <property type="evidence" value="ECO:0007669"/>
    <property type="project" value="InterPro"/>
</dbReference>
<dbReference type="GO" id="GO:0009279">
    <property type="term" value="C:cell outer membrane"/>
    <property type="evidence" value="ECO:0007669"/>
    <property type="project" value="UniProtKB-SubCell"/>
</dbReference>
<dbReference type="GO" id="GO:0003774">
    <property type="term" value="F:cytoskeletal motor activity"/>
    <property type="evidence" value="ECO:0007669"/>
    <property type="project" value="InterPro"/>
</dbReference>
<dbReference type="GO" id="GO:0071973">
    <property type="term" value="P:bacterial-type flagellum-dependent cell motility"/>
    <property type="evidence" value="ECO:0007669"/>
    <property type="project" value="InterPro"/>
</dbReference>
<dbReference type="HAMAP" id="MF_00415">
    <property type="entry name" value="FlgH"/>
    <property type="match status" value="1"/>
</dbReference>
<dbReference type="InterPro" id="IPR000527">
    <property type="entry name" value="Flag_Lring"/>
</dbReference>
<dbReference type="NCBIfam" id="NF001304">
    <property type="entry name" value="PRK00249.1-4"/>
    <property type="match status" value="1"/>
</dbReference>
<dbReference type="NCBIfam" id="NF009338">
    <property type="entry name" value="PRK12698.1"/>
    <property type="match status" value="1"/>
</dbReference>
<dbReference type="PANTHER" id="PTHR34933">
    <property type="entry name" value="FLAGELLAR L-RING PROTEIN"/>
    <property type="match status" value="1"/>
</dbReference>
<dbReference type="PANTHER" id="PTHR34933:SF1">
    <property type="entry name" value="FLAGELLAR L-RING PROTEIN"/>
    <property type="match status" value="1"/>
</dbReference>
<dbReference type="Pfam" id="PF02107">
    <property type="entry name" value="FlgH"/>
    <property type="match status" value="1"/>
</dbReference>
<dbReference type="PRINTS" id="PR01008">
    <property type="entry name" value="FLGLRINGFLGH"/>
</dbReference>
<dbReference type="PROSITE" id="PS51257">
    <property type="entry name" value="PROKAR_LIPOPROTEIN"/>
    <property type="match status" value="1"/>
</dbReference>
<name>FLGH_SHEB8</name>
<organism>
    <name type="scientific">Shewanella baltica (strain OS185)</name>
    <dbReference type="NCBI Taxonomy" id="402882"/>
    <lineage>
        <taxon>Bacteria</taxon>
        <taxon>Pseudomonadati</taxon>
        <taxon>Pseudomonadota</taxon>
        <taxon>Gammaproteobacteria</taxon>
        <taxon>Alteromonadales</taxon>
        <taxon>Shewanellaceae</taxon>
        <taxon>Shewanella</taxon>
    </lineage>
</organism>
<evidence type="ECO:0000255" key="1">
    <source>
        <dbReference type="HAMAP-Rule" id="MF_00415"/>
    </source>
</evidence>
<reference key="1">
    <citation type="submission" date="2007-07" db="EMBL/GenBank/DDBJ databases">
        <title>Complete sequence of chromosome of Shewanella baltica OS185.</title>
        <authorList>
            <consortium name="US DOE Joint Genome Institute"/>
            <person name="Copeland A."/>
            <person name="Lucas S."/>
            <person name="Lapidus A."/>
            <person name="Barry K."/>
            <person name="Glavina del Rio T."/>
            <person name="Dalin E."/>
            <person name="Tice H."/>
            <person name="Pitluck S."/>
            <person name="Sims D."/>
            <person name="Brettin T."/>
            <person name="Bruce D."/>
            <person name="Detter J.C."/>
            <person name="Han C."/>
            <person name="Schmutz J."/>
            <person name="Larimer F."/>
            <person name="Land M."/>
            <person name="Hauser L."/>
            <person name="Kyrpides N."/>
            <person name="Mikhailova N."/>
            <person name="Brettar I."/>
            <person name="Rodrigues J."/>
            <person name="Konstantinidis K."/>
            <person name="Tiedje J."/>
            <person name="Richardson P."/>
        </authorList>
    </citation>
    <scope>NUCLEOTIDE SEQUENCE [LARGE SCALE GENOMIC DNA]</scope>
    <source>
        <strain>OS185</strain>
    </source>
</reference>
<feature type="signal peptide" evidence="1">
    <location>
        <begin position="1"/>
        <end position="15"/>
    </location>
</feature>
<feature type="chain" id="PRO_1000050098" description="Flagellar L-ring protein">
    <location>
        <begin position="16"/>
        <end position="224"/>
    </location>
</feature>
<feature type="lipid moiety-binding region" description="N-palmitoyl cysteine" evidence="1">
    <location>
        <position position="16"/>
    </location>
</feature>
<feature type="lipid moiety-binding region" description="S-diacylglycerol cysteine" evidence="1">
    <location>
        <position position="16"/>
    </location>
</feature>
<comment type="function">
    <text evidence="1">Assembles around the rod to form the L-ring and probably protects the motor/basal body from shearing forces during rotation.</text>
</comment>
<comment type="subunit">
    <text evidence="1">The basal body constitutes a major portion of the flagellar organelle and consists of four rings (L,P,S, and M) mounted on a central rod.</text>
</comment>
<comment type="subcellular location">
    <subcellularLocation>
        <location evidence="1">Cell outer membrane</location>
        <topology evidence="1">Lipid-anchor</topology>
    </subcellularLocation>
    <subcellularLocation>
        <location evidence="1">Bacterial flagellum basal body</location>
    </subcellularLocation>
</comment>
<comment type="similarity">
    <text evidence="1">Belongs to the FlgH family.</text>
</comment>
<keyword id="KW-0975">Bacterial flagellum</keyword>
<keyword id="KW-0998">Cell outer membrane</keyword>
<keyword id="KW-0449">Lipoprotein</keyword>
<keyword id="KW-0472">Membrane</keyword>
<keyword id="KW-0564">Palmitate</keyword>
<keyword id="KW-0732">Signal</keyword>
<sequence length="224" mass="24320">MARYLVLAVALLLAACSSTQKKPLADDPFYAPVYPEAPPTKIAATGSIYQDSQASSLYSDIRAHKVGDIITIVLKESTQAKKSAGNQIKKGSDMSLDPIFAGGSNISVGGVPIDLRYKDSMNTKRESDADQSNSLDGSISANVMQVLNNGSLVIRGEKWISINNGDEFIRVTGLVRSQDIKPDNTIDSTRMANARIQYSGTGTFADAQKVGWLSQFFMSDWWPF</sequence>